<gene>
    <name evidence="2" type="primary">rpsL</name>
    <name type="ordered locus">Dgeo_1873</name>
</gene>
<evidence type="ECO:0000250" key="1"/>
<evidence type="ECO:0000255" key="2">
    <source>
        <dbReference type="HAMAP-Rule" id="MF_00403"/>
    </source>
</evidence>
<evidence type="ECO:0000256" key="3">
    <source>
        <dbReference type="SAM" id="MobiDB-lite"/>
    </source>
</evidence>
<evidence type="ECO:0000305" key="4"/>
<dbReference type="EMBL" id="CP000359">
    <property type="protein sequence ID" value="ABF46168.1"/>
    <property type="status" value="ALT_INIT"/>
    <property type="molecule type" value="Genomic_DNA"/>
</dbReference>
<dbReference type="RefSeq" id="WP_041221741.1">
    <property type="nucleotide sequence ID" value="NC_008025.1"/>
</dbReference>
<dbReference type="SMR" id="Q1IX66"/>
<dbReference type="STRING" id="319795.Dgeo_1873"/>
<dbReference type="KEGG" id="dge:Dgeo_1873"/>
<dbReference type="eggNOG" id="COG0048">
    <property type="taxonomic scope" value="Bacteria"/>
</dbReference>
<dbReference type="HOGENOM" id="CLU_104295_1_2_0"/>
<dbReference type="Proteomes" id="UP000002431">
    <property type="component" value="Chromosome"/>
</dbReference>
<dbReference type="GO" id="GO:0015935">
    <property type="term" value="C:small ribosomal subunit"/>
    <property type="evidence" value="ECO:0007669"/>
    <property type="project" value="InterPro"/>
</dbReference>
<dbReference type="GO" id="GO:0019843">
    <property type="term" value="F:rRNA binding"/>
    <property type="evidence" value="ECO:0007669"/>
    <property type="project" value="UniProtKB-UniRule"/>
</dbReference>
<dbReference type="GO" id="GO:0003735">
    <property type="term" value="F:structural constituent of ribosome"/>
    <property type="evidence" value="ECO:0007669"/>
    <property type="project" value="InterPro"/>
</dbReference>
<dbReference type="GO" id="GO:0000049">
    <property type="term" value="F:tRNA binding"/>
    <property type="evidence" value="ECO:0007669"/>
    <property type="project" value="UniProtKB-UniRule"/>
</dbReference>
<dbReference type="GO" id="GO:0006412">
    <property type="term" value="P:translation"/>
    <property type="evidence" value="ECO:0007669"/>
    <property type="project" value="UniProtKB-UniRule"/>
</dbReference>
<dbReference type="CDD" id="cd03368">
    <property type="entry name" value="Ribosomal_S12"/>
    <property type="match status" value="1"/>
</dbReference>
<dbReference type="FunFam" id="2.40.50.140:FF:000001">
    <property type="entry name" value="30S ribosomal protein S12"/>
    <property type="match status" value="1"/>
</dbReference>
<dbReference type="Gene3D" id="2.40.50.140">
    <property type="entry name" value="Nucleic acid-binding proteins"/>
    <property type="match status" value="1"/>
</dbReference>
<dbReference type="HAMAP" id="MF_00403_B">
    <property type="entry name" value="Ribosomal_uS12_B"/>
    <property type="match status" value="1"/>
</dbReference>
<dbReference type="InterPro" id="IPR012340">
    <property type="entry name" value="NA-bd_OB-fold"/>
</dbReference>
<dbReference type="InterPro" id="IPR006032">
    <property type="entry name" value="Ribosomal_uS12"/>
</dbReference>
<dbReference type="InterPro" id="IPR005679">
    <property type="entry name" value="Ribosomal_uS12_bac"/>
</dbReference>
<dbReference type="NCBIfam" id="TIGR00981">
    <property type="entry name" value="rpsL_bact"/>
    <property type="match status" value="1"/>
</dbReference>
<dbReference type="PANTHER" id="PTHR11652">
    <property type="entry name" value="30S RIBOSOMAL PROTEIN S12 FAMILY MEMBER"/>
    <property type="match status" value="1"/>
</dbReference>
<dbReference type="Pfam" id="PF00164">
    <property type="entry name" value="Ribosom_S12_S23"/>
    <property type="match status" value="1"/>
</dbReference>
<dbReference type="PIRSF" id="PIRSF002133">
    <property type="entry name" value="Ribosomal_S12/S23"/>
    <property type="match status" value="1"/>
</dbReference>
<dbReference type="PRINTS" id="PR01034">
    <property type="entry name" value="RIBOSOMALS12"/>
</dbReference>
<dbReference type="SUPFAM" id="SSF50249">
    <property type="entry name" value="Nucleic acid-binding proteins"/>
    <property type="match status" value="1"/>
</dbReference>
<dbReference type="PROSITE" id="PS00055">
    <property type="entry name" value="RIBOSOMAL_S12"/>
    <property type="match status" value="1"/>
</dbReference>
<protein>
    <recommendedName>
        <fullName evidence="2">Small ribosomal subunit protein uS12</fullName>
    </recommendedName>
    <alternativeName>
        <fullName evidence="4">30S ribosomal protein S12</fullName>
    </alternativeName>
</protein>
<proteinExistence type="inferred from homology"/>
<feature type="chain" id="PRO_0000263553" description="Small ribosomal subunit protein uS12">
    <location>
        <begin position="1"/>
        <end position="134"/>
    </location>
</feature>
<feature type="region of interest" description="Disordered" evidence="3">
    <location>
        <begin position="1"/>
        <end position="26"/>
    </location>
</feature>
<feature type="region of interest" description="Disordered" evidence="3">
    <location>
        <begin position="103"/>
        <end position="134"/>
    </location>
</feature>
<feature type="compositionally biased region" description="Basic residues" evidence="3">
    <location>
        <begin position="9"/>
        <end position="20"/>
    </location>
</feature>
<feature type="compositionally biased region" description="Basic residues" evidence="3">
    <location>
        <begin position="113"/>
        <end position="123"/>
    </location>
</feature>
<feature type="compositionally biased region" description="Low complexity" evidence="3">
    <location>
        <begin position="124"/>
        <end position="134"/>
    </location>
</feature>
<feature type="modified residue" description="3-methylthioaspartic acid" evidence="1">
    <location>
        <position position="89"/>
    </location>
</feature>
<accession>Q1IX66</accession>
<sequence>MPTTQQLLRKGRTTLQKKSKVPALKGSPFRRGVCTVVKTTTPKKPNSALRKIARVRLSSGFEVTAYIPGEGHNLQEHSVVLIRGGRVKDLPGVRYHIVRGSLDTQGVKDRNKSRSKYGTKKPKAGAAAAGAKKK</sequence>
<keyword id="KW-0488">Methylation</keyword>
<keyword id="KW-0687">Ribonucleoprotein</keyword>
<keyword id="KW-0689">Ribosomal protein</keyword>
<keyword id="KW-0694">RNA-binding</keyword>
<keyword id="KW-0699">rRNA-binding</keyword>
<keyword id="KW-0820">tRNA-binding</keyword>
<name>RS12_DEIGD</name>
<comment type="function">
    <text evidence="2">With S4 and S5 plays an important role in translational accuracy.</text>
</comment>
<comment type="function">
    <text evidence="2">Interacts with and stabilizes bases of the 16S rRNA that are involved in tRNA selection in the A site and with the mRNA backbone. Located at the interface of the 30S and 50S subunits, it traverses the body of the 30S subunit contacting proteins on the other side and probably holding the rRNA structure together. The combined cluster of proteins S8, S12 and S17 appears to hold together the shoulder and platform of the 30S subunit.</text>
</comment>
<comment type="subunit">
    <text evidence="2">Part of the 30S ribosomal subunit. Contacts proteins S8 and S17. May interact with IF1 in the 30S initiation complex.</text>
</comment>
<comment type="similarity">
    <text evidence="2">Belongs to the universal ribosomal protein uS12 family.</text>
</comment>
<comment type="sequence caution" evidence="4">
    <conflict type="erroneous initiation">
        <sequence resource="EMBL-CDS" id="ABF46168"/>
    </conflict>
</comment>
<organism>
    <name type="scientific">Deinococcus geothermalis (strain DSM 11300 / CIP 105573 / AG-3a)</name>
    <dbReference type="NCBI Taxonomy" id="319795"/>
    <lineage>
        <taxon>Bacteria</taxon>
        <taxon>Thermotogati</taxon>
        <taxon>Deinococcota</taxon>
        <taxon>Deinococci</taxon>
        <taxon>Deinococcales</taxon>
        <taxon>Deinococcaceae</taxon>
        <taxon>Deinococcus</taxon>
    </lineage>
</organism>
<reference key="1">
    <citation type="submission" date="2006-04" db="EMBL/GenBank/DDBJ databases">
        <title>Complete sequence of chromosome of Deinococcus geothermalis DSM 11300.</title>
        <authorList>
            <person name="Copeland A."/>
            <person name="Lucas S."/>
            <person name="Lapidus A."/>
            <person name="Barry K."/>
            <person name="Detter J.C."/>
            <person name="Glavina del Rio T."/>
            <person name="Hammon N."/>
            <person name="Israni S."/>
            <person name="Dalin E."/>
            <person name="Tice H."/>
            <person name="Pitluck S."/>
            <person name="Brettin T."/>
            <person name="Bruce D."/>
            <person name="Han C."/>
            <person name="Tapia R."/>
            <person name="Saunders E."/>
            <person name="Gilna P."/>
            <person name="Schmutz J."/>
            <person name="Larimer F."/>
            <person name="Land M."/>
            <person name="Hauser L."/>
            <person name="Kyrpides N."/>
            <person name="Kim E."/>
            <person name="Daly M.J."/>
            <person name="Fredrickson J.K."/>
            <person name="Makarova K.S."/>
            <person name="Gaidamakova E.K."/>
            <person name="Zhai M."/>
            <person name="Richardson P."/>
        </authorList>
    </citation>
    <scope>NUCLEOTIDE SEQUENCE [LARGE SCALE GENOMIC DNA]</scope>
    <source>
        <strain>DSM 11300 / CIP 105573 / AG-3a</strain>
    </source>
</reference>